<accession>A3PAR3</accession>
<organism>
    <name type="scientific">Prochlorococcus marinus (strain MIT 9301)</name>
    <dbReference type="NCBI Taxonomy" id="167546"/>
    <lineage>
        <taxon>Bacteria</taxon>
        <taxon>Bacillati</taxon>
        <taxon>Cyanobacteriota</taxon>
        <taxon>Cyanophyceae</taxon>
        <taxon>Synechococcales</taxon>
        <taxon>Prochlorococcaceae</taxon>
        <taxon>Prochlorococcus</taxon>
    </lineage>
</organism>
<evidence type="ECO:0000255" key="1">
    <source>
        <dbReference type="HAMAP-Rule" id="MF_00145"/>
    </source>
</evidence>
<reference key="1">
    <citation type="journal article" date="2007" name="PLoS Genet.">
        <title>Patterns and implications of gene gain and loss in the evolution of Prochlorococcus.</title>
        <authorList>
            <person name="Kettler G.C."/>
            <person name="Martiny A.C."/>
            <person name="Huang K."/>
            <person name="Zucker J."/>
            <person name="Coleman M.L."/>
            <person name="Rodrigue S."/>
            <person name="Chen F."/>
            <person name="Lapidus A."/>
            <person name="Ferriera S."/>
            <person name="Johnson J."/>
            <person name="Steglich C."/>
            <person name="Church G.M."/>
            <person name="Richardson P."/>
            <person name="Chisholm S.W."/>
        </authorList>
    </citation>
    <scope>NUCLEOTIDE SEQUENCE [LARGE SCALE GENOMIC DNA]</scope>
    <source>
        <strain>MIT 9301</strain>
    </source>
</reference>
<gene>
    <name evidence="1" type="primary">pgk</name>
    <name type="ordered locus">P9301_02151</name>
</gene>
<sequence>MSKLSLSSLDKTHLEGKKVLVRVDFNVPLNEDGQITDDTRIRAAIPTIEYLVNHSAKVILAAHFGRPKGQVNEKMRLTPVAARLSELLGQSVALTNSCIGDEAVAKSNSLSNRDVLLLENVRFFGEEEKNDLEFAQKLASHADMYVNDAFGAAHRAHASTQGVTNYLSPSVAGFLLEKELKYLQGAVDSPNRPLAAIVGGSKVSSKIGVLDSLLDKCDKIMIGGGMIFTFYKARGLDVGKSLVEEDKLELAKDLEAKAKAKGVELLLPTDVVLANEFSPDAESKISQIDSISGNWMGLDIGPDSIKVFQNALAECKTIIWNGPMGVFEFDKFADGTNAIATTLADLSAFSEVCTIIGGGDSVAAVEKAGLAEKMSHISTGGGASLELLEGKILPGVAALNDA</sequence>
<protein>
    <recommendedName>
        <fullName evidence="1">Phosphoglycerate kinase</fullName>
        <ecNumber evidence="1">2.7.2.3</ecNumber>
    </recommendedName>
</protein>
<keyword id="KW-0067">ATP-binding</keyword>
<keyword id="KW-0963">Cytoplasm</keyword>
<keyword id="KW-0324">Glycolysis</keyword>
<keyword id="KW-0418">Kinase</keyword>
<keyword id="KW-0547">Nucleotide-binding</keyword>
<keyword id="KW-1185">Reference proteome</keyword>
<keyword id="KW-0808">Transferase</keyword>
<dbReference type="EC" id="2.7.2.3" evidence="1"/>
<dbReference type="EMBL" id="CP000576">
    <property type="protein sequence ID" value="ABO16838.1"/>
    <property type="molecule type" value="Genomic_DNA"/>
</dbReference>
<dbReference type="RefSeq" id="WP_011862240.1">
    <property type="nucleotide sequence ID" value="NC_009091.1"/>
</dbReference>
<dbReference type="SMR" id="A3PAR3"/>
<dbReference type="STRING" id="167546.P9301_02151"/>
<dbReference type="KEGG" id="pmg:P9301_02151"/>
<dbReference type="eggNOG" id="COG0126">
    <property type="taxonomic scope" value="Bacteria"/>
</dbReference>
<dbReference type="HOGENOM" id="CLU_025427_0_2_3"/>
<dbReference type="OrthoDB" id="9808460at2"/>
<dbReference type="UniPathway" id="UPA00109">
    <property type="reaction ID" value="UER00185"/>
</dbReference>
<dbReference type="Proteomes" id="UP000001430">
    <property type="component" value="Chromosome"/>
</dbReference>
<dbReference type="GO" id="GO:0005829">
    <property type="term" value="C:cytosol"/>
    <property type="evidence" value="ECO:0007669"/>
    <property type="project" value="TreeGrafter"/>
</dbReference>
<dbReference type="GO" id="GO:0043531">
    <property type="term" value="F:ADP binding"/>
    <property type="evidence" value="ECO:0007669"/>
    <property type="project" value="TreeGrafter"/>
</dbReference>
<dbReference type="GO" id="GO:0005524">
    <property type="term" value="F:ATP binding"/>
    <property type="evidence" value="ECO:0007669"/>
    <property type="project" value="UniProtKB-KW"/>
</dbReference>
<dbReference type="GO" id="GO:0004618">
    <property type="term" value="F:phosphoglycerate kinase activity"/>
    <property type="evidence" value="ECO:0007669"/>
    <property type="project" value="UniProtKB-UniRule"/>
</dbReference>
<dbReference type="GO" id="GO:0006094">
    <property type="term" value="P:gluconeogenesis"/>
    <property type="evidence" value="ECO:0007669"/>
    <property type="project" value="TreeGrafter"/>
</dbReference>
<dbReference type="GO" id="GO:0006096">
    <property type="term" value="P:glycolytic process"/>
    <property type="evidence" value="ECO:0007669"/>
    <property type="project" value="UniProtKB-UniRule"/>
</dbReference>
<dbReference type="CDD" id="cd00318">
    <property type="entry name" value="Phosphoglycerate_kinase"/>
    <property type="match status" value="1"/>
</dbReference>
<dbReference type="FunFam" id="3.40.50.1260:FF:000003">
    <property type="entry name" value="Phosphoglycerate kinase"/>
    <property type="match status" value="1"/>
</dbReference>
<dbReference type="FunFam" id="3.40.50.1260:FF:000006">
    <property type="entry name" value="Phosphoglycerate kinase"/>
    <property type="match status" value="1"/>
</dbReference>
<dbReference type="Gene3D" id="3.40.50.1260">
    <property type="entry name" value="Phosphoglycerate kinase, N-terminal domain"/>
    <property type="match status" value="2"/>
</dbReference>
<dbReference type="HAMAP" id="MF_00145">
    <property type="entry name" value="Phosphoglyc_kinase"/>
    <property type="match status" value="1"/>
</dbReference>
<dbReference type="InterPro" id="IPR001576">
    <property type="entry name" value="Phosphoglycerate_kinase"/>
</dbReference>
<dbReference type="InterPro" id="IPR015911">
    <property type="entry name" value="Phosphoglycerate_kinase_CS"/>
</dbReference>
<dbReference type="InterPro" id="IPR015824">
    <property type="entry name" value="Phosphoglycerate_kinase_N"/>
</dbReference>
<dbReference type="InterPro" id="IPR036043">
    <property type="entry name" value="Phosphoglycerate_kinase_sf"/>
</dbReference>
<dbReference type="PANTHER" id="PTHR11406">
    <property type="entry name" value="PHOSPHOGLYCERATE KINASE"/>
    <property type="match status" value="1"/>
</dbReference>
<dbReference type="PANTHER" id="PTHR11406:SF23">
    <property type="entry name" value="PHOSPHOGLYCERATE KINASE 1, CHLOROPLASTIC-RELATED"/>
    <property type="match status" value="1"/>
</dbReference>
<dbReference type="Pfam" id="PF00162">
    <property type="entry name" value="PGK"/>
    <property type="match status" value="1"/>
</dbReference>
<dbReference type="PIRSF" id="PIRSF000724">
    <property type="entry name" value="Pgk"/>
    <property type="match status" value="1"/>
</dbReference>
<dbReference type="PRINTS" id="PR00477">
    <property type="entry name" value="PHGLYCKINASE"/>
</dbReference>
<dbReference type="SUPFAM" id="SSF53748">
    <property type="entry name" value="Phosphoglycerate kinase"/>
    <property type="match status" value="1"/>
</dbReference>
<dbReference type="PROSITE" id="PS00111">
    <property type="entry name" value="PGLYCERATE_KINASE"/>
    <property type="match status" value="1"/>
</dbReference>
<comment type="catalytic activity">
    <reaction evidence="1">
        <text>(2R)-3-phosphoglycerate + ATP = (2R)-3-phospho-glyceroyl phosphate + ADP</text>
        <dbReference type="Rhea" id="RHEA:14801"/>
        <dbReference type="ChEBI" id="CHEBI:30616"/>
        <dbReference type="ChEBI" id="CHEBI:57604"/>
        <dbReference type="ChEBI" id="CHEBI:58272"/>
        <dbReference type="ChEBI" id="CHEBI:456216"/>
        <dbReference type="EC" id="2.7.2.3"/>
    </reaction>
</comment>
<comment type="pathway">
    <text evidence="1">Carbohydrate degradation; glycolysis; pyruvate from D-glyceraldehyde 3-phosphate: step 2/5.</text>
</comment>
<comment type="subunit">
    <text evidence="1">Monomer.</text>
</comment>
<comment type="subcellular location">
    <subcellularLocation>
        <location evidence="1">Cytoplasm</location>
    </subcellularLocation>
</comment>
<comment type="similarity">
    <text evidence="1">Belongs to the phosphoglycerate kinase family.</text>
</comment>
<proteinExistence type="inferred from homology"/>
<name>PGK_PROM0</name>
<feature type="chain" id="PRO_1000058025" description="Phosphoglycerate kinase">
    <location>
        <begin position="1"/>
        <end position="402"/>
    </location>
</feature>
<feature type="binding site" evidence="1">
    <location>
        <begin position="24"/>
        <end position="26"/>
    </location>
    <ligand>
        <name>substrate</name>
    </ligand>
</feature>
<feature type="binding site" evidence="1">
    <location>
        <position position="40"/>
    </location>
    <ligand>
        <name>substrate</name>
    </ligand>
</feature>
<feature type="binding site" evidence="1">
    <location>
        <begin position="63"/>
        <end position="66"/>
    </location>
    <ligand>
        <name>substrate</name>
    </ligand>
</feature>
<feature type="binding site" evidence="1">
    <location>
        <position position="122"/>
    </location>
    <ligand>
        <name>substrate</name>
    </ligand>
</feature>
<feature type="binding site" evidence="1">
    <location>
        <position position="155"/>
    </location>
    <ligand>
        <name>substrate</name>
    </ligand>
</feature>
<feature type="binding site" evidence="1">
    <location>
        <position position="206"/>
    </location>
    <ligand>
        <name>ATP</name>
        <dbReference type="ChEBI" id="CHEBI:30616"/>
    </ligand>
</feature>
<feature type="binding site" evidence="1">
    <location>
        <position position="297"/>
    </location>
    <ligand>
        <name>ATP</name>
        <dbReference type="ChEBI" id="CHEBI:30616"/>
    </ligand>
</feature>
<feature type="binding site" evidence="1">
    <location>
        <position position="328"/>
    </location>
    <ligand>
        <name>ATP</name>
        <dbReference type="ChEBI" id="CHEBI:30616"/>
    </ligand>
</feature>
<feature type="binding site" evidence="1">
    <location>
        <begin position="358"/>
        <end position="361"/>
    </location>
    <ligand>
        <name>ATP</name>
        <dbReference type="ChEBI" id="CHEBI:30616"/>
    </ligand>
</feature>